<keyword id="KW-0066">ATP synthesis</keyword>
<keyword id="KW-0997">Cell inner membrane</keyword>
<keyword id="KW-1003">Cell membrane</keyword>
<keyword id="KW-0138">CF(0)</keyword>
<keyword id="KW-0375">Hydrogen ion transport</keyword>
<keyword id="KW-0406">Ion transport</keyword>
<keyword id="KW-0446">Lipid-binding</keyword>
<keyword id="KW-0472">Membrane</keyword>
<keyword id="KW-1185">Reference proteome</keyword>
<keyword id="KW-0812">Transmembrane</keyword>
<keyword id="KW-1133">Transmembrane helix</keyword>
<keyword id="KW-0813">Transport</keyword>
<dbReference type="EMBL" id="CP000698">
    <property type="protein sequence ID" value="ABQ28392.1"/>
    <property type="molecule type" value="Genomic_DNA"/>
</dbReference>
<dbReference type="RefSeq" id="WP_011941023.1">
    <property type="nucleotide sequence ID" value="NC_009483.1"/>
</dbReference>
<dbReference type="SMR" id="A5G9C4"/>
<dbReference type="STRING" id="351605.Gura_4249"/>
<dbReference type="KEGG" id="gur:Gura_4249"/>
<dbReference type="HOGENOM" id="CLU_148047_2_0_7"/>
<dbReference type="OrthoDB" id="5296711at2"/>
<dbReference type="Proteomes" id="UP000006695">
    <property type="component" value="Chromosome"/>
</dbReference>
<dbReference type="GO" id="GO:0005886">
    <property type="term" value="C:plasma membrane"/>
    <property type="evidence" value="ECO:0007669"/>
    <property type="project" value="UniProtKB-SubCell"/>
</dbReference>
<dbReference type="GO" id="GO:0045259">
    <property type="term" value="C:proton-transporting ATP synthase complex"/>
    <property type="evidence" value="ECO:0007669"/>
    <property type="project" value="UniProtKB-KW"/>
</dbReference>
<dbReference type="GO" id="GO:0033177">
    <property type="term" value="C:proton-transporting two-sector ATPase complex, proton-transporting domain"/>
    <property type="evidence" value="ECO:0007669"/>
    <property type="project" value="InterPro"/>
</dbReference>
<dbReference type="GO" id="GO:0008289">
    <property type="term" value="F:lipid binding"/>
    <property type="evidence" value="ECO:0007669"/>
    <property type="project" value="UniProtKB-KW"/>
</dbReference>
<dbReference type="GO" id="GO:0046933">
    <property type="term" value="F:proton-transporting ATP synthase activity, rotational mechanism"/>
    <property type="evidence" value="ECO:0007669"/>
    <property type="project" value="UniProtKB-UniRule"/>
</dbReference>
<dbReference type="CDD" id="cd18121">
    <property type="entry name" value="ATP-synt_Fo_c"/>
    <property type="match status" value="1"/>
</dbReference>
<dbReference type="Gene3D" id="1.20.120.610">
    <property type="entry name" value="lithium bound rotor ring of v- atpase"/>
    <property type="match status" value="1"/>
</dbReference>
<dbReference type="HAMAP" id="MF_01396">
    <property type="entry name" value="ATP_synth_c_bact"/>
    <property type="match status" value="1"/>
</dbReference>
<dbReference type="InterPro" id="IPR005953">
    <property type="entry name" value="ATP_synth_csu_bac/chlpt"/>
</dbReference>
<dbReference type="InterPro" id="IPR000454">
    <property type="entry name" value="ATP_synth_F0_csu"/>
</dbReference>
<dbReference type="InterPro" id="IPR020537">
    <property type="entry name" value="ATP_synth_F0_csu_DDCD_BS"/>
</dbReference>
<dbReference type="InterPro" id="IPR002379">
    <property type="entry name" value="ATPase_proteolipid_c-like_dom"/>
</dbReference>
<dbReference type="InterPro" id="IPR035921">
    <property type="entry name" value="F/V-ATP_Csub_sf"/>
</dbReference>
<dbReference type="NCBIfam" id="TIGR01260">
    <property type="entry name" value="ATP_synt_c"/>
    <property type="match status" value="1"/>
</dbReference>
<dbReference type="PANTHER" id="PTHR10031">
    <property type="entry name" value="ATP SYNTHASE LIPID-BINDING PROTEIN, MITOCHONDRIAL"/>
    <property type="match status" value="1"/>
</dbReference>
<dbReference type="PANTHER" id="PTHR10031:SF0">
    <property type="entry name" value="ATPASE PROTEIN 9"/>
    <property type="match status" value="1"/>
</dbReference>
<dbReference type="Pfam" id="PF00137">
    <property type="entry name" value="ATP-synt_C"/>
    <property type="match status" value="1"/>
</dbReference>
<dbReference type="PRINTS" id="PR00124">
    <property type="entry name" value="ATPASEC"/>
</dbReference>
<dbReference type="SUPFAM" id="SSF81333">
    <property type="entry name" value="F1F0 ATP synthase subunit C"/>
    <property type="match status" value="1"/>
</dbReference>
<dbReference type="PROSITE" id="PS00605">
    <property type="entry name" value="ATPASE_C"/>
    <property type="match status" value="1"/>
</dbReference>
<name>ATPL_GEOUR</name>
<comment type="function">
    <text evidence="1">F(1)F(0) ATP synthase produces ATP from ADP in the presence of a proton or sodium gradient. F-type ATPases consist of two structural domains, F(1) containing the extramembraneous catalytic core and F(0) containing the membrane proton channel, linked together by a central stalk and a peripheral stalk. During catalysis, ATP synthesis in the catalytic domain of F(1) is coupled via a rotary mechanism of the central stalk subunits to proton translocation.</text>
</comment>
<comment type="function">
    <text evidence="1">Key component of the F(0) channel; it plays a direct role in translocation across the membrane. A homomeric c-ring of between 10-14 subunits forms the central stalk rotor element with the F(1) delta and epsilon subunits.</text>
</comment>
<comment type="subunit">
    <text evidence="1">F-type ATPases have 2 components, F(1) - the catalytic core - and F(0) - the membrane proton channel. F(1) has five subunits: alpha(3), beta(3), gamma(1), delta(1), epsilon(1). F(0) has three main subunits: a(1), b(2) and c(10-14). The alpha and beta chains form an alternating ring which encloses part of the gamma chain. F(1) is attached to F(0) by a central stalk formed by the gamma and epsilon chains, while a peripheral stalk is formed by the delta and b chains.</text>
</comment>
<comment type="subcellular location">
    <subcellularLocation>
        <location evidence="1">Cell inner membrane</location>
        <topology evidence="1">Multi-pass membrane protein</topology>
    </subcellularLocation>
</comment>
<comment type="similarity">
    <text evidence="1">Belongs to the ATPase C chain family.</text>
</comment>
<accession>A5G9C4</accession>
<evidence type="ECO:0000255" key="1">
    <source>
        <dbReference type="HAMAP-Rule" id="MF_01396"/>
    </source>
</evidence>
<gene>
    <name evidence="1" type="primary">atpE</name>
    <name type="ordered locus">Gura_4249</name>
</gene>
<proteinExistence type="inferred from homology"/>
<feature type="chain" id="PRO_5000245494" description="ATP synthase subunit c">
    <location>
        <begin position="1"/>
        <end position="91"/>
    </location>
</feature>
<feature type="transmembrane region" description="Helical" evidence="1">
    <location>
        <begin position="4"/>
        <end position="24"/>
    </location>
</feature>
<feature type="transmembrane region" description="Helical" evidence="1">
    <location>
        <begin position="53"/>
        <end position="73"/>
    </location>
</feature>
<feature type="site" description="Reversibly protonated during proton transport" evidence="1">
    <location>
        <position position="59"/>
    </location>
</feature>
<protein>
    <recommendedName>
        <fullName evidence="1">ATP synthase subunit c</fullName>
    </recommendedName>
    <alternativeName>
        <fullName evidence="1">ATP synthase F(0) sector subunit c</fullName>
    </alternativeName>
    <alternativeName>
        <fullName evidence="1">F-type ATPase subunit c</fullName>
        <shortName evidence="1">F-ATPase subunit c</shortName>
    </alternativeName>
    <alternativeName>
        <fullName evidence="1">Lipid-binding protein</fullName>
    </alternativeName>
</protein>
<reference key="1">
    <citation type="submission" date="2007-05" db="EMBL/GenBank/DDBJ databases">
        <title>Complete sequence of Geobacter uraniireducens Rf4.</title>
        <authorList>
            <consortium name="US DOE Joint Genome Institute"/>
            <person name="Copeland A."/>
            <person name="Lucas S."/>
            <person name="Lapidus A."/>
            <person name="Barry K."/>
            <person name="Detter J.C."/>
            <person name="Glavina del Rio T."/>
            <person name="Hammon N."/>
            <person name="Israni S."/>
            <person name="Dalin E."/>
            <person name="Tice H."/>
            <person name="Pitluck S."/>
            <person name="Chertkov O."/>
            <person name="Brettin T."/>
            <person name="Bruce D."/>
            <person name="Han C."/>
            <person name="Schmutz J."/>
            <person name="Larimer F."/>
            <person name="Land M."/>
            <person name="Hauser L."/>
            <person name="Kyrpides N."/>
            <person name="Mikhailova N."/>
            <person name="Shelobolina E."/>
            <person name="Aklujkar M."/>
            <person name="Lovley D."/>
            <person name="Richardson P."/>
        </authorList>
    </citation>
    <scope>NUCLEOTIDE SEQUENCE [LARGE SCALE GENOMIC DNA]</scope>
    <source>
        <strain>ATCC BAA-1134 / JCM 13001 / Rf4</strain>
    </source>
</reference>
<sequence length="91" mass="9307">MSFFTMCVLAAGIGMALGTLGTGIGQGLAVKSAVEGVSRNPGASGKILTTMMIGLAMIESLAIYALVVCLIILFANPYKEIALELAKTVAK</sequence>
<organism>
    <name type="scientific">Geotalea uraniireducens (strain Rf4)</name>
    <name type="common">Geobacter uraniireducens</name>
    <dbReference type="NCBI Taxonomy" id="351605"/>
    <lineage>
        <taxon>Bacteria</taxon>
        <taxon>Pseudomonadati</taxon>
        <taxon>Thermodesulfobacteriota</taxon>
        <taxon>Desulfuromonadia</taxon>
        <taxon>Geobacterales</taxon>
        <taxon>Geobacteraceae</taxon>
        <taxon>Geotalea</taxon>
    </lineage>
</organism>